<organism>
    <name type="scientific">Staphylococcus epidermidis (strain ATCC 35984 / DSM 28319 / BCRC 17069 / CCUG 31568 / BM 3577 / RP62A)</name>
    <dbReference type="NCBI Taxonomy" id="176279"/>
    <lineage>
        <taxon>Bacteria</taxon>
        <taxon>Bacillati</taxon>
        <taxon>Bacillota</taxon>
        <taxon>Bacilli</taxon>
        <taxon>Bacillales</taxon>
        <taxon>Staphylococcaceae</taxon>
        <taxon>Staphylococcus</taxon>
    </lineage>
</organism>
<evidence type="ECO:0000255" key="1">
    <source>
        <dbReference type="HAMAP-Rule" id="MF_01019"/>
    </source>
</evidence>
<protein>
    <recommendedName>
        <fullName evidence="1">Histidine biosynthesis bifunctional protein HisIE</fullName>
    </recommendedName>
    <domain>
        <recommendedName>
            <fullName evidence="1">Phosphoribosyl-AMP cyclohydrolase</fullName>
            <shortName evidence="1">PRA-CH</shortName>
            <ecNumber evidence="1">3.5.4.19</ecNumber>
        </recommendedName>
    </domain>
    <domain>
        <recommendedName>
            <fullName evidence="1">Phosphoribosyl-ATP pyrophosphatase</fullName>
            <shortName evidence="1">PRA-PH</shortName>
            <ecNumber evidence="1">3.6.1.31</ecNumber>
        </recommendedName>
    </domain>
</protein>
<feature type="chain" id="PRO_0000136437" description="Histidine biosynthesis bifunctional protein HisIE">
    <location>
        <begin position="1"/>
        <end position="211"/>
    </location>
</feature>
<feature type="region of interest" description="Phosphoribosyl-AMP cyclohydrolase">
    <location>
        <begin position="1"/>
        <end position="107"/>
    </location>
</feature>
<feature type="region of interest" description="Phosphoribosyl-ATP pyrophosphohydrolase">
    <location>
        <begin position="108"/>
        <end position="211"/>
    </location>
</feature>
<sequence>MNKLIDFSKGLVPVILQHAQTDSVLMLGYMNEEAYQKTLKEKKVTFFSRSKQRLWTKGETSGHFQHVESIHLDCDQDAILIKVMPQGPTCHTGSLSCFNSEIESRFKIQALAQTIHQSAKANQSNSYTQYLLKEGIEKISKKFGEEAFEVVIGAIKHNREEVINETADVMYHLFVLLHSLDIPFSEVEQVLAHRHQKRNNFKGERKEVREW</sequence>
<keyword id="KW-0028">Amino-acid biosynthesis</keyword>
<keyword id="KW-0067">ATP-binding</keyword>
<keyword id="KW-0963">Cytoplasm</keyword>
<keyword id="KW-0368">Histidine biosynthesis</keyword>
<keyword id="KW-0378">Hydrolase</keyword>
<keyword id="KW-0511">Multifunctional enzyme</keyword>
<keyword id="KW-0547">Nucleotide-binding</keyword>
<keyword id="KW-1185">Reference proteome</keyword>
<dbReference type="EC" id="3.5.4.19" evidence="1"/>
<dbReference type="EC" id="3.6.1.31" evidence="1"/>
<dbReference type="EMBL" id="CP000029">
    <property type="protein sequence ID" value="AAW53189.1"/>
    <property type="molecule type" value="Genomic_DNA"/>
</dbReference>
<dbReference type="RefSeq" id="WP_002470292.1">
    <property type="nucleotide sequence ID" value="NC_002976.3"/>
</dbReference>
<dbReference type="SMR" id="Q5HKP3"/>
<dbReference type="STRING" id="176279.SERP2300"/>
<dbReference type="KEGG" id="ser:SERP2300"/>
<dbReference type="eggNOG" id="COG0139">
    <property type="taxonomic scope" value="Bacteria"/>
</dbReference>
<dbReference type="eggNOG" id="COG0140">
    <property type="taxonomic scope" value="Bacteria"/>
</dbReference>
<dbReference type="HOGENOM" id="CLU_048577_3_1_9"/>
<dbReference type="UniPathway" id="UPA00031">
    <property type="reaction ID" value="UER00007"/>
</dbReference>
<dbReference type="UniPathway" id="UPA00031">
    <property type="reaction ID" value="UER00008"/>
</dbReference>
<dbReference type="Proteomes" id="UP000000531">
    <property type="component" value="Chromosome"/>
</dbReference>
<dbReference type="GO" id="GO:0005737">
    <property type="term" value="C:cytoplasm"/>
    <property type="evidence" value="ECO:0007669"/>
    <property type="project" value="UniProtKB-SubCell"/>
</dbReference>
<dbReference type="GO" id="GO:0005524">
    <property type="term" value="F:ATP binding"/>
    <property type="evidence" value="ECO:0007669"/>
    <property type="project" value="UniProtKB-KW"/>
</dbReference>
<dbReference type="GO" id="GO:0004635">
    <property type="term" value="F:phosphoribosyl-AMP cyclohydrolase activity"/>
    <property type="evidence" value="ECO:0007669"/>
    <property type="project" value="UniProtKB-UniRule"/>
</dbReference>
<dbReference type="GO" id="GO:0004636">
    <property type="term" value="F:phosphoribosyl-ATP diphosphatase activity"/>
    <property type="evidence" value="ECO:0007669"/>
    <property type="project" value="UniProtKB-UniRule"/>
</dbReference>
<dbReference type="GO" id="GO:0000105">
    <property type="term" value="P:L-histidine biosynthetic process"/>
    <property type="evidence" value="ECO:0007669"/>
    <property type="project" value="UniProtKB-UniRule"/>
</dbReference>
<dbReference type="CDD" id="cd11534">
    <property type="entry name" value="NTP-PPase_HisIE_like"/>
    <property type="match status" value="1"/>
</dbReference>
<dbReference type="FunFam" id="3.10.20.810:FF:000001">
    <property type="entry name" value="Histidine biosynthesis bifunctional protein HisIE"/>
    <property type="match status" value="1"/>
</dbReference>
<dbReference type="Gene3D" id="1.10.287.1080">
    <property type="entry name" value="MazG-like"/>
    <property type="match status" value="1"/>
</dbReference>
<dbReference type="Gene3D" id="3.10.20.810">
    <property type="entry name" value="Phosphoribosyl-AMP cyclohydrolase"/>
    <property type="match status" value="1"/>
</dbReference>
<dbReference type="HAMAP" id="MF_01019">
    <property type="entry name" value="HisIE"/>
    <property type="match status" value="1"/>
</dbReference>
<dbReference type="InterPro" id="IPR023019">
    <property type="entry name" value="His_synth_HisIE"/>
</dbReference>
<dbReference type="InterPro" id="IPR008179">
    <property type="entry name" value="HisE"/>
</dbReference>
<dbReference type="InterPro" id="IPR021130">
    <property type="entry name" value="PRib-ATP_PPHydrolase-like"/>
</dbReference>
<dbReference type="InterPro" id="IPR002496">
    <property type="entry name" value="PRib_AMP_CycHydrolase_dom"/>
</dbReference>
<dbReference type="InterPro" id="IPR038019">
    <property type="entry name" value="PRib_AMP_CycHydrolase_sf"/>
</dbReference>
<dbReference type="NCBIfam" id="TIGR03188">
    <property type="entry name" value="histidine_hisI"/>
    <property type="match status" value="1"/>
</dbReference>
<dbReference type="NCBIfam" id="NF000768">
    <property type="entry name" value="PRK00051.1"/>
    <property type="match status" value="1"/>
</dbReference>
<dbReference type="NCBIfam" id="NF002747">
    <property type="entry name" value="PRK02759.1"/>
    <property type="match status" value="1"/>
</dbReference>
<dbReference type="PANTHER" id="PTHR42945">
    <property type="entry name" value="HISTIDINE BIOSYNTHESIS BIFUNCTIONAL PROTEIN"/>
    <property type="match status" value="1"/>
</dbReference>
<dbReference type="PANTHER" id="PTHR42945:SF9">
    <property type="entry name" value="HISTIDINE BIOSYNTHESIS BIFUNCTIONAL PROTEIN HISIE"/>
    <property type="match status" value="1"/>
</dbReference>
<dbReference type="Pfam" id="PF01502">
    <property type="entry name" value="PRA-CH"/>
    <property type="match status" value="1"/>
</dbReference>
<dbReference type="Pfam" id="PF01503">
    <property type="entry name" value="PRA-PH"/>
    <property type="match status" value="1"/>
</dbReference>
<dbReference type="SUPFAM" id="SSF101386">
    <property type="entry name" value="all-alpha NTP pyrophosphatases"/>
    <property type="match status" value="1"/>
</dbReference>
<dbReference type="SUPFAM" id="SSF141734">
    <property type="entry name" value="HisI-like"/>
    <property type="match status" value="1"/>
</dbReference>
<proteinExistence type="inferred from homology"/>
<reference key="1">
    <citation type="journal article" date="2005" name="J. Bacteriol.">
        <title>Insights on evolution of virulence and resistance from the complete genome analysis of an early methicillin-resistant Staphylococcus aureus strain and a biofilm-producing methicillin-resistant Staphylococcus epidermidis strain.</title>
        <authorList>
            <person name="Gill S.R."/>
            <person name="Fouts D.E."/>
            <person name="Archer G.L."/>
            <person name="Mongodin E.F."/>
            <person name="DeBoy R.T."/>
            <person name="Ravel J."/>
            <person name="Paulsen I.T."/>
            <person name="Kolonay J.F."/>
            <person name="Brinkac L.M."/>
            <person name="Beanan M.J."/>
            <person name="Dodson R.J."/>
            <person name="Daugherty S.C."/>
            <person name="Madupu R."/>
            <person name="Angiuoli S.V."/>
            <person name="Durkin A.S."/>
            <person name="Haft D.H."/>
            <person name="Vamathevan J.J."/>
            <person name="Khouri H."/>
            <person name="Utterback T.R."/>
            <person name="Lee C."/>
            <person name="Dimitrov G."/>
            <person name="Jiang L."/>
            <person name="Qin H."/>
            <person name="Weidman J."/>
            <person name="Tran K."/>
            <person name="Kang K.H."/>
            <person name="Hance I.R."/>
            <person name="Nelson K.E."/>
            <person name="Fraser C.M."/>
        </authorList>
    </citation>
    <scope>NUCLEOTIDE SEQUENCE [LARGE SCALE GENOMIC DNA]</scope>
    <source>
        <strain>ATCC 35984 / DSM 28319 / BCRC 17069 / CCUG 31568 / BM 3577 / RP62A</strain>
    </source>
</reference>
<comment type="catalytic activity">
    <reaction evidence="1">
        <text>1-(5-phospho-beta-D-ribosyl)-ATP + H2O = 1-(5-phospho-beta-D-ribosyl)-5'-AMP + diphosphate + H(+)</text>
        <dbReference type="Rhea" id="RHEA:22828"/>
        <dbReference type="ChEBI" id="CHEBI:15377"/>
        <dbReference type="ChEBI" id="CHEBI:15378"/>
        <dbReference type="ChEBI" id="CHEBI:33019"/>
        <dbReference type="ChEBI" id="CHEBI:59457"/>
        <dbReference type="ChEBI" id="CHEBI:73183"/>
        <dbReference type="EC" id="3.6.1.31"/>
    </reaction>
</comment>
<comment type="catalytic activity">
    <reaction evidence="1">
        <text>1-(5-phospho-beta-D-ribosyl)-5'-AMP + H2O = 1-(5-phospho-beta-D-ribosyl)-5-[(5-phospho-beta-D-ribosylamino)methylideneamino]imidazole-4-carboxamide</text>
        <dbReference type="Rhea" id="RHEA:20049"/>
        <dbReference type="ChEBI" id="CHEBI:15377"/>
        <dbReference type="ChEBI" id="CHEBI:58435"/>
        <dbReference type="ChEBI" id="CHEBI:59457"/>
        <dbReference type="EC" id="3.5.4.19"/>
    </reaction>
</comment>
<comment type="pathway">
    <text evidence="1">Amino-acid biosynthesis; L-histidine biosynthesis; L-histidine from 5-phospho-alpha-D-ribose 1-diphosphate: step 2/9.</text>
</comment>
<comment type="pathway">
    <text evidence="1">Amino-acid biosynthesis; L-histidine biosynthesis; L-histidine from 5-phospho-alpha-D-ribose 1-diphosphate: step 3/9.</text>
</comment>
<comment type="subcellular location">
    <subcellularLocation>
        <location evidence="1">Cytoplasm</location>
    </subcellularLocation>
</comment>
<comment type="similarity">
    <text evidence="1">In the N-terminal section; belongs to the PRA-CH family.</text>
</comment>
<comment type="similarity">
    <text evidence="1">In the C-terminal section; belongs to the PRA-PH family.</text>
</comment>
<gene>
    <name evidence="1" type="primary">hisI</name>
    <name evidence="1" type="synonym">hisIE</name>
    <name type="ordered locus">SERP2300</name>
</gene>
<name>HIS2_STAEQ</name>
<accession>Q5HKP3</accession>